<name>P78_NPVAC</name>
<sequence>MTNRRYESVQSYLFNNRNNKIDAHQFFERVDTAEAQIIKNNIYDNTVVLNRDVLLNILKLANDVFDNKAYMYVDDSEVSRHYNAVVKMKRLVIGVRDPSLRQSLYNTIAYIERLLNIGTVNDSEITMLIADFYDLYSNYNIELPPPQALPRSRRPSVVQPAAPAPVPTIVREQTKPEQIIPAAPPPPPSPVPNIPAPPPPPPPSMSELPPAPPMPTEPQPAAPLDDRQQLLEAIRNEKNRTRLRPVKPKTAPETSTIVEVPTVLPKETFEPKPPSASPPPPPPPPPPPAPPAPPPMVDLSSAPPPPPLVDLPSEMLPPPAPSLSNVLSELKSGTVRLKPAQKRPQSEIIPKSSTTNLIADVLADTINRRRVAMAKSSSEATSNDEGWDDDDNRPNKANTPDVKYVQALFNVFTSSQLYTNDSDERNTKAHNILNDVEPLLQNKTQTNIDKARLLLQDLASFVALSENPLDSPAIGSEKQPLFETNRNLFYKSIEDLIFKFRYKDAENHLIFALTYHPKDYKFNELLKYVQQLSVNQQRTESSA</sequence>
<evidence type="ECO:0000255" key="1">
    <source>
        <dbReference type="PROSITE-ProRule" id="PRU00406"/>
    </source>
</evidence>
<evidence type="ECO:0000256" key="2">
    <source>
        <dbReference type="SAM" id="MobiDB-lite"/>
    </source>
</evidence>
<evidence type="ECO:0000269" key="3">
    <source>
    </source>
</evidence>
<evidence type="ECO:0000269" key="4">
    <source>
    </source>
</evidence>
<evidence type="ECO:0000269" key="5">
    <source>
    </source>
</evidence>
<evidence type="ECO:0000305" key="6"/>
<keyword id="KW-1035">Host cytoplasm</keyword>
<keyword id="KW-1048">Host nucleus</keyword>
<keyword id="KW-1185">Reference proteome</keyword>
<gene>
    <name type="primary">P61</name>
    <name type="ORF">ORF9</name>
</gene>
<dbReference type="EMBL" id="Z11662">
    <property type="protein sequence ID" value="CAA77730.1"/>
    <property type="molecule type" value="Genomic_DNA"/>
</dbReference>
<dbReference type="EMBL" id="M75679">
    <property type="protein sequence ID" value="AAA46705.1"/>
    <property type="molecule type" value="Genomic_DNA"/>
</dbReference>
<dbReference type="EMBL" id="L22858">
    <property type="protein sequence ID" value="AAA66639.1"/>
    <property type="molecule type" value="Genomic_DNA"/>
</dbReference>
<dbReference type="PIR" id="S25128">
    <property type="entry name" value="S25128"/>
</dbReference>
<dbReference type="KEGG" id="vg:1403841"/>
<dbReference type="OrthoDB" id="4891at10239"/>
<dbReference type="Proteomes" id="UP000008292">
    <property type="component" value="Segment"/>
</dbReference>
<dbReference type="GO" id="GO:0043657">
    <property type="term" value="C:host cell"/>
    <property type="evidence" value="ECO:0007669"/>
    <property type="project" value="GOC"/>
</dbReference>
<dbReference type="GO" id="GO:0030430">
    <property type="term" value="C:host cell cytoplasm"/>
    <property type="evidence" value="ECO:0000314"/>
    <property type="project" value="UniProtKB"/>
</dbReference>
<dbReference type="GO" id="GO:0042025">
    <property type="term" value="C:host cell nucleus"/>
    <property type="evidence" value="ECO:0000314"/>
    <property type="project" value="UniProtKB"/>
</dbReference>
<dbReference type="GO" id="GO:0003779">
    <property type="term" value="F:actin binding"/>
    <property type="evidence" value="ECO:0007669"/>
    <property type="project" value="InterPro"/>
</dbReference>
<dbReference type="GO" id="GO:0075520">
    <property type="term" value="P:actin-dependent intracellular transport of virus"/>
    <property type="evidence" value="ECO:0000314"/>
    <property type="project" value="UniProtKB"/>
</dbReference>
<dbReference type="InterPro" id="IPR003124">
    <property type="entry name" value="WH2_dom"/>
</dbReference>
<dbReference type="PRINTS" id="PR01217">
    <property type="entry name" value="PRICHEXTENSN"/>
</dbReference>
<dbReference type="SUPFAM" id="SSF101447">
    <property type="entry name" value="Formin homology 2 domain (FH2 domain)"/>
    <property type="match status" value="1"/>
</dbReference>
<dbReference type="PROSITE" id="PS51082">
    <property type="entry name" value="WH2"/>
    <property type="match status" value="1"/>
</dbReference>
<proteinExistence type="evidence at protein level"/>
<organismHost>
    <name type="scientific">Lepidoptera</name>
    <name type="common">butterflies and moths</name>
    <dbReference type="NCBI Taxonomy" id="7088"/>
</organismHost>
<comment type="function">
    <text evidence="4 5">Plays a role in the transport of the nucleocapsids from the cytoplasm toward the host nucleus together with the host actin-polymerizing Arp2/3 complex.</text>
</comment>
<comment type="subunit">
    <text evidence="3 4">Forms a complex with proteins C42 and E27. Interacts with host actin-related protein 2/3 complex. Interacts with protein Ac102.</text>
</comment>
<comment type="subcellular location">
    <subcellularLocation>
        <location evidence="4">Host cytoplasm</location>
    </subcellularLocation>
    <subcellularLocation>
        <location evidence="4">Host nucleus</location>
    </subcellularLocation>
</comment>
<reference key="1">
    <citation type="journal article" date="1992" name="Gene">
        <title>Sequence and in vitro translational analysis of a 1629-nucleotide ORF in Autographa californica nuclear polyhedrosis virus strain E2.</title>
        <authorList>
            <person name="Pham D.Q.-D."/>
            <person name="Sivasubramanian N."/>
        </authorList>
    </citation>
    <scope>NUCLEOTIDE SEQUENCE [GENOMIC DNA]</scope>
    <source>
        <strain>E2</strain>
    </source>
</reference>
<reference key="2">
    <citation type="journal article" date="1991" name="Virology">
        <title>Nucleotide sequence of the Autographa californica nuclear polyhedrosis 9.4 kbp EcoRI-I and -R (polyhedrin gene) region.</title>
        <authorList>
            <person name="Possee R.D."/>
            <person name="Sun T.P."/>
            <person name="Howard S.C."/>
            <person name="Ayres M.D."/>
            <person name="Hill-Perkins M."/>
            <person name="Gearing K.L."/>
        </authorList>
    </citation>
    <scope>NUCLEOTIDE SEQUENCE [GENOMIC DNA]</scope>
    <source>
        <strain>C6</strain>
    </source>
</reference>
<reference key="3">
    <citation type="journal article" date="1994" name="Virology">
        <title>The complete DNA sequence of Autographa californica nuclear polyhedrosis virus.</title>
        <authorList>
            <person name="Ayres M.D."/>
            <person name="Howard S.C."/>
            <person name="Kuzio J."/>
            <person name="Lopez-Ferber M."/>
            <person name="Possee R.D."/>
        </authorList>
    </citation>
    <scope>NUCLEOTIDE SEQUENCE [LARGE SCALE GENOMIC DNA]</scope>
    <source>
        <strain>C6</strain>
    </source>
</reference>
<reference key="4">
    <citation type="journal article" date="2001" name="J. Virol.">
        <title>Identification of BV/ODV-C42, an Autographa californica nucleopolyhedrovirus orf101-encoded structural protein detected in infected-cell complexes with ODV-EC27 and p78/83.</title>
        <authorList>
            <person name="Braunagel S.C."/>
            <person name="Guidry P.A."/>
            <person name="Rosas-Acosta G."/>
            <person name="Engelking L."/>
            <person name="Summers M.D."/>
        </authorList>
    </citation>
    <scope>INTERACTION WITH C42 AND E27</scope>
</reference>
<reference key="5">
    <citation type="journal article" date="2006" name="Science">
        <title>Dynamic nuclear actin assembly by Arp2/3 complex and a baculovirus WASP-like protein.</title>
        <authorList>
            <person name="Goley E.D."/>
            <person name="Ohkawa T."/>
            <person name="Mancuso J."/>
            <person name="Woodruff J.B."/>
            <person name="D'Alessio J.A."/>
            <person name="Cande W.Z."/>
            <person name="Volkman L.E."/>
            <person name="Welch M.D."/>
        </authorList>
    </citation>
    <scope>FUNCTION</scope>
    <scope>SUBCELLULAR LOCATION</scope>
    <scope>INTERACTION WITH HOST ARP2/3</scope>
</reference>
<reference key="6">
    <citation type="journal article" date="2010" name="J. Cell Biol.">
        <title>Actin-based motility drives baculovirus transit to the nucleus and cell surface.</title>
        <authorList>
            <person name="Ohkawa T."/>
            <person name="Volkman L.E."/>
            <person name="Welch M.D."/>
        </authorList>
    </citation>
    <scope>FUNCTION</scope>
</reference>
<reference key="7">
    <citation type="journal article" date="2018" name="J. Virol.">
        <title>Baculovirus AC102 is a nucleocapsid protein that is crucial for nuclear actin polymerization and nucleocapsid morphogenesis.</title>
        <authorList>
            <person name="Hepp S.E."/>
            <person name="Borgo G.M."/>
            <person name="Ticau S."/>
            <person name="Ohkawa T."/>
            <person name="Welch M.D."/>
        </authorList>
    </citation>
    <scope>FUNCTION</scope>
    <scope>SUBCELLULAR LOCATION</scope>
    <scope>INTERACTION WITH PROTEIN AC102</scope>
</reference>
<feature type="chain" id="PRO_0000132912" description="Protein P78/83">
    <location>
        <begin position="1"/>
        <end position="543"/>
    </location>
</feature>
<feature type="domain" description="WH2" evidence="1">
    <location>
        <begin position="226"/>
        <end position="246"/>
    </location>
</feature>
<feature type="region of interest" description="Disordered" evidence="2">
    <location>
        <begin position="147"/>
        <end position="222"/>
    </location>
</feature>
<feature type="region of interest" description="Disordered" evidence="2">
    <location>
        <begin position="235"/>
        <end position="325"/>
    </location>
</feature>
<feature type="region of interest" description="Disordered" evidence="2">
    <location>
        <begin position="373"/>
        <end position="400"/>
    </location>
</feature>
<feature type="compositionally biased region" description="Pro residues" evidence="2">
    <location>
        <begin position="182"/>
        <end position="221"/>
    </location>
</feature>
<feature type="compositionally biased region" description="Pro residues" evidence="2">
    <location>
        <begin position="271"/>
        <end position="321"/>
    </location>
</feature>
<feature type="compositionally biased region" description="Polar residues" evidence="2">
    <location>
        <begin position="375"/>
        <end position="384"/>
    </location>
</feature>
<feature type="sequence conflict" description="In Ref. 1; CAA77730." evidence="6" ref="1">
    <original>V</original>
    <variation>A</variation>
    <location>
        <position position="361"/>
    </location>
</feature>
<accession>Q03209</accession>
<organism>
    <name type="scientific">Autographa californica nuclear polyhedrosis virus</name>
    <name type="common">AcMNPV</name>
    <dbReference type="NCBI Taxonomy" id="46015"/>
    <lineage>
        <taxon>Viruses</taxon>
        <taxon>Viruses incertae sedis</taxon>
        <taxon>Naldaviricetes</taxon>
        <taxon>Lefavirales</taxon>
        <taxon>Baculoviridae</taxon>
        <taxon>Alphabaculovirus</taxon>
        <taxon>Alphabaculovirus aucalifornicae</taxon>
    </lineage>
</organism>
<protein>
    <recommendedName>
        <fullName>Protein P78/83</fullName>
    </recommendedName>
</protein>